<organism>
    <name type="scientific">Clostridium kluyveri (strain NBRC 12016)</name>
    <dbReference type="NCBI Taxonomy" id="583346"/>
    <lineage>
        <taxon>Bacteria</taxon>
        <taxon>Bacillati</taxon>
        <taxon>Bacillota</taxon>
        <taxon>Clostridia</taxon>
        <taxon>Eubacteriales</taxon>
        <taxon>Clostridiaceae</taxon>
        <taxon>Clostridium</taxon>
    </lineage>
</organism>
<protein>
    <recommendedName>
        <fullName evidence="1">Phosphomethylpyrimidine synthase</fullName>
        <ecNumber evidence="1">4.1.99.17</ecNumber>
    </recommendedName>
    <alternativeName>
        <fullName evidence="1">Hydroxymethylpyrimidine phosphate synthase</fullName>
        <shortName evidence="1">HMP-P synthase</shortName>
        <shortName evidence="1">HMP-phosphate synthase</shortName>
        <shortName evidence="1">HMPP synthase</shortName>
    </alternativeName>
    <alternativeName>
        <fullName evidence="1">Thiamine biosynthesis protein ThiC</fullName>
    </alternativeName>
</protein>
<name>THIC_CLOK1</name>
<proteinExistence type="inferred from homology"/>
<accession>B9E2H5</accession>
<comment type="function">
    <text evidence="1">Catalyzes the synthesis of the hydroxymethylpyrimidine phosphate (HMP-P) moiety of thiamine from aminoimidazole ribotide (AIR) in a radical S-adenosyl-L-methionine (SAM)-dependent reaction.</text>
</comment>
<comment type="catalytic activity">
    <reaction evidence="1">
        <text>5-amino-1-(5-phospho-beta-D-ribosyl)imidazole + S-adenosyl-L-methionine = 4-amino-2-methyl-5-(phosphooxymethyl)pyrimidine + CO + 5'-deoxyadenosine + formate + L-methionine + 3 H(+)</text>
        <dbReference type="Rhea" id="RHEA:24840"/>
        <dbReference type="ChEBI" id="CHEBI:15378"/>
        <dbReference type="ChEBI" id="CHEBI:15740"/>
        <dbReference type="ChEBI" id="CHEBI:17245"/>
        <dbReference type="ChEBI" id="CHEBI:17319"/>
        <dbReference type="ChEBI" id="CHEBI:57844"/>
        <dbReference type="ChEBI" id="CHEBI:58354"/>
        <dbReference type="ChEBI" id="CHEBI:59789"/>
        <dbReference type="ChEBI" id="CHEBI:137981"/>
        <dbReference type="EC" id="4.1.99.17"/>
    </reaction>
</comment>
<comment type="cofactor">
    <cofactor evidence="1">
        <name>[4Fe-4S] cluster</name>
        <dbReference type="ChEBI" id="CHEBI:49883"/>
    </cofactor>
    <text evidence="1">Binds 1 [4Fe-4S] cluster per subunit. The cluster is coordinated with 3 cysteines and an exchangeable S-adenosyl-L-methionine.</text>
</comment>
<comment type="pathway">
    <text evidence="1">Cofactor biosynthesis; thiamine diphosphate biosynthesis.</text>
</comment>
<comment type="similarity">
    <text evidence="1">Belongs to the ThiC family.</text>
</comment>
<reference key="1">
    <citation type="submission" date="2005-09" db="EMBL/GenBank/DDBJ databases">
        <title>Complete genome sequence of Clostridium kluyveri and comparative genomics of Clostridia species.</title>
        <authorList>
            <person name="Inui M."/>
            <person name="Nonaka H."/>
            <person name="Shinoda Y."/>
            <person name="Ikenaga Y."/>
            <person name="Abe M."/>
            <person name="Naito K."/>
            <person name="Vertes A.A."/>
            <person name="Yukawa H."/>
        </authorList>
    </citation>
    <scope>NUCLEOTIDE SEQUENCE [LARGE SCALE GENOMIC DNA]</scope>
    <source>
        <strain>NBRC 12016</strain>
    </source>
</reference>
<gene>
    <name evidence="1" type="primary">thiC</name>
    <name type="ordered locus">CKR_1649</name>
</gene>
<feature type="chain" id="PRO_1000118505" description="Phosphomethylpyrimidine synthase">
    <location>
        <begin position="1"/>
        <end position="437"/>
    </location>
</feature>
<feature type="binding site" evidence="1">
    <location>
        <position position="69"/>
    </location>
    <ligand>
        <name>substrate</name>
    </ligand>
</feature>
<feature type="binding site" evidence="1">
    <location>
        <position position="98"/>
    </location>
    <ligand>
        <name>substrate</name>
    </ligand>
</feature>
<feature type="binding site" evidence="1">
    <location>
        <position position="127"/>
    </location>
    <ligand>
        <name>substrate</name>
    </ligand>
</feature>
<feature type="binding site" evidence="1">
    <location>
        <position position="163"/>
    </location>
    <ligand>
        <name>substrate</name>
    </ligand>
</feature>
<feature type="binding site" evidence="1">
    <location>
        <begin position="185"/>
        <end position="187"/>
    </location>
    <ligand>
        <name>substrate</name>
    </ligand>
</feature>
<feature type="binding site" evidence="1">
    <location>
        <begin position="226"/>
        <end position="229"/>
    </location>
    <ligand>
        <name>substrate</name>
    </ligand>
</feature>
<feature type="binding site" evidence="1">
    <location>
        <position position="265"/>
    </location>
    <ligand>
        <name>substrate</name>
    </ligand>
</feature>
<feature type="binding site" evidence="1">
    <location>
        <position position="269"/>
    </location>
    <ligand>
        <name>Zn(2+)</name>
        <dbReference type="ChEBI" id="CHEBI:29105"/>
    </ligand>
</feature>
<feature type="binding site" evidence="1">
    <location>
        <position position="292"/>
    </location>
    <ligand>
        <name>substrate</name>
    </ligand>
</feature>
<feature type="binding site" evidence="1">
    <location>
        <position position="333"/>
    </location>
    <ligand>
        <name>Zn(2+)</name>
        <dbReference type="ChEBI" id="CHEBI:29105"/>
    </ligand>
</feature>
<feature type="binding site" evidence="1">
    <location>
        <position position="409"/>
    </location>
    <ligand>
        <name>[4Fe-4S] cluster</name>
        <dbReference type="ChEBI" id="CHEBI:49883"/>
        <note>4Fe-4S-S-AdoMet</note>
    </ligand>
</feature>
<feature type="binding site" evidence="1">
    <location>
        <position position="412"/>
    </location>
    <ligand>
        <name>[4Fe-4S] cluster</name>
        <dbReference type="ChEBI" id="CHEBI:49883"/>
        <note>4Fe-4S-S-AdoMet</note>
    </ligand>
</feature>
<feature type="binding site" evidence="1">
    <location>
        <position position="416"/>
    </location>
    <ligand>
        <name>[4Fe-4S] cluster</name>
        <dbReference type="ChEBI" id="CHEBI:49883"/>
        <note>4Fe-4S-S-AdoMet</note>
    </ligand>
</feature>
<evidence type="ECO:0000255" key="1">
    <source>
        <dbReference type="HAMAP-Rule" id="MF_00089"/>
    </source>
</evidence>
<sequence length="437" mass="48725">MNFTTQMDAAKKGIITKEMKVVSQKEGVDVEILRELVAEGKIVIPANKNHKSLDAQGVGQGLKTKINVNLGISKDCANIDMELEKVKTAIEMKAEAIMDLSSYGKTEEFRKRIVEMCSVMIGTVPIYDAVGFYDKELSDISPEEFLAVVEKHAQDGVDFMTIHAGINRETAKVFKRNKRLTNIVSRGGSLLYAWMELNNKENPFYEYYDKVLDICARYDVTISLGDACRPGSINDSTDASQIKELITLGELTKRAWEKNVQVIVEGPGHMSLNEIAANMQLEKKLCHGAPFYVLGPLVTDIAPGYDHITSAIGGAIAAANGADFLCYVTPAEHLRLPNLEDMKEGIIASKIAAHAADVSNNIKGAKEWDYKMSEARKELNWEKMFDLAIDPEKARRYRRESTPEHEDTCTMCGKMCAVRNMNKVMEGKNINILREED</sequence>
<dbReference type="EC" id="4.1.99.17" evidence="1"/>
<dbReference type="EMBL" id="AP009049">
    <property type="protein sequence ID" value="BAH06700.1"/>
    <property type="molecule type" value="Genomic_DNA"/>
</dbReference>
<dbReference type="RefSeq" id="WP_012102171.1">
    <property type="nucleotide sequence ID" value="NC_011837.1"/>
</dbReference>
<dbReference type="SMR" id="B9E2H5"/>
<dbReference type="KEGG" id="ckr:CKR_1649"/>
<dbReference type="HOGENOM" id="CLU_013181_2_2_9"/>
<dbReference type="UniPathway" id="UPA00060"/>
<dbReference type="Proteomes" id="UP000007969">
    <property type="component" value="Chromosome"/>
</dbReference>
<dbReference type="GO" id="GO:0005829">
    <property type="term" value="C:cytosol"/>
    <property type="evidence" value="ECO:0007669"/>
    <property type="project" value="TreeGrafter"/>
</dbReference>
<dbReference type="GO" id="GO:0051539">
    <property type="term" value="F:4 iron, 4 sulfur cluster binding"/>
    <property type="evidence" value="ECO:0007669"/>
    <property type="project" value="UniProtKB-KW"/>
</dbReference>
<dbReference type="GO" id="GO:0016830">
    <property type="term" value="F:carbon-carbon lyase activity"/>
    <property type="evidence" value="ECO:0007669"/>
    <property type="project" value="InterPro"/>
</dbReference>
<dbReference type="GO" id="GO:0008270">
    <property type="term" value="F:zinc ion binding"/>
    <property type="evidence" value="ECO:0007669"/>
    <property type="project" value="UniProtKB-UniRule"/>
</dbReference>
<dbReference type="GO" id="GO:0009228">
    <property type="term" value="P:thiamine biosynthetic process"/>
    <property type="evidence" value="ECO:0007669"/>
    <property type="project" value="UniProtKB-KW"/>
</dbReference>
<dbReference type="GO" id="GO:0009229">
    <property type="term" value="P:thiamine diphosphate biosynthetic process"/>
    <property type="evidence" value="ECO:0007669"/>
    <property type="project" value="UniProtKB-UniRule"/>
</dbReference>
<dbReference type="FunFam" id="3.20.20.540:FF:000001">
    <property type="entry name" value="Phosphomethylpyrimidine synthase"/>
    <property type="match status" value="1"/>
</dbReference>
<dbReference type="Gene3D" id="6.10.250.620">
    <property type="match status" value="1"/>
</dbReference>
<dbReference type="Gene3D" id="3.20.20.540">
    <property type="entry name" value="Radical SAM ThiC family, central domain"/>
    <property type="match status" value="1"/>
</dbReference>
<dbReference type="HAMAP" id="MF_00089">
    <property type="entry name" value="ThiC"/>
    <property type="match status" value="1"/>
</dbReference>
<dbReference type="InterPro" id="IPR037509">
    <property type="entry name" value="ThiC"/>
</dbReference>
<dbReference type="InterPro" id="IPR038521">
    <property type="entry name" value="ThiC/Bza_core_dom"/>
</dbReference>
<dbReference type="InterPro" id="IPR002817">
    <property type="entry name" value="ThiC/BzaA/B"/>
</dbReference>
<dbReference type="NCBIfam" id="NF009895">
    <property type="entry name" value="PRK13352.1"/>
    <property type="match status" value="1"/>
</dbReference>
<dbReference type="NCBIfam" id="TIGR00190">
    <property type="entry name" value="thiC"/>
    <property type="match status" value="1"/>
</dbReference>
<dbReference type="PANTHER" id="PTHR30557:SF1">
    <property type="entry name" value="PHOSPHOMETHYLPYRIMIDINE SYNTHASE, CHLOROPLASTIC"/>
    <property type="match status" value="1"/>
</dbReference>
<dbReference type="PANTHER" id="PTHR30557">
    <property type="entry name" value="THIAMINE BIOSYNTHESIS PROTEIN THIC"/>
    <property type="match status" value="1"/>
</dbReference>
<dbReference type="Pfam" id="PF01964">
    <property type="entry name" value="ThiC_Rad_SAM"/>
    <property type="match status" value="1"/>
</dbReference>
<dbReference type="SFLD" id="SFLDF00407">
    <property type="entry name" value="phosphomethylpyrimidine_syntha"/>
    <property type="match status" value="1"/>
</dbReference>
<dbReference type="SFLD" id="SFLDG01114">
    <property type="entry name" value="phosphomethylpyrimidine_syntha"/>
    <property type="match status" value="1"/>
</dbReference>
<dbReference type="SFLD" id="SFLDS00113">
    <property type="entry name" value="Radical_SAM_Phosphomethylpyrim"/>
    <property type="match status" value="1"/>
</dbReference>
<keyword id="KW-0004">4Fe-4S</keyword>
<keyword id="KW-0408">Iron</keyword>
<keyword id="KW-0411">Iron-sulfur</keyword>
<keyword id="KW-0456">Lyase</keyword>
<keyword id="KW-0479">Metal-binding</keyword>
<keyword id="KW-0949">S-adenosyl-L-methionine</keyword>
<keyword id="KW-0784">Thiamine biosynthesis</keyword>
<keyword id="KW-0862">Zinc</keyword>